<comment type="subcellular location">
    <subcellularLocation>
        <location evidence="2">Membrane</location>
        <topology evidence="2">Single-pass membrane protein</topology>
    </subcellularLocation>
</comment>
<comment type="miscellaneous">
    <text evidence="2">Overlaps HYP2.</text>
</comment>
<comment type="caution">
    <text evidence="3">Product of a dubious gene prediction unlikely to encode a functional protein. Because of that it is not part of the S.cerevisiae S288c complete/reference proteome set.</text>
</comment>
<name>YE034_YEAST</name>
<protein>
    <recommendedName>
        <fullName>Putative uncharacterized protein YEL034C-A</fullName>
    </recommendedName>
</protein>
<evidence type="ECO:0000255" key="1"/>
<evidence type="ECO:0000305" key="2"/>
<evidence type="ECO:0000305" key="3">
    <source>
    </source>
</evidence>
<dbReference type="EMBL" id="U18779">
    <property type="status" value="NOT_ANNOTATED_CDS"/>
    <property type="molecule type" value="Genomic_DNA"/>
</dbReference>
<dbReference type="EMBL" id="S65964">
    <property type="protein sequence ID" value="AAD13969.1"/>
    <property type="molecule type" value="Genomic_DNA"/>
</dbReference>
<dbReference type="STRING" id="4932.YEL034C-A"/>
<dbReference type="PaxDb" id="4932-YEL034C-A"/>
<dbReference type="EnsemblFungi" id="YEL034C-A_mRNA">
    <property type="protein sequence ID" value="YEL034C-A"/>
    <property type="gene ID" value="YEL034C-A"/>
</dbReference>
<dbReference type="AGR" id="SGD:S000028743"/>
<dbReference type="SGD" id="S000028743">
    <property type="gene designation" value="YEL034C-A"/>
</dbReference>
<dbReference type="HOGENOM" id="CLU_1367191_0_0_1"/>
<dbReference type="GO" id="GO:0016020">
    <property type="term" value="C:membrane"/>
    <property type="evidence" value="ECO:0007669"/>
    <property type="project" value="UniProtKB-SubCell"/>
</dbReference>
<keyword id="KW-0472">Membrane</keyword>
<keyword id="KW-0812">Transmembrane</keyword>
<keyword id="KW-1133">Transmembrane helix</keyword>
<reference key="1">
    <citation type="journal article" date="1997" name="Nature">
        <title>The nucleotide sequence of Saccharomyces cerevisiae chromosome V.</title>
        <authorList>
            <person name="Dietrich F.S."/>
            <person name="Mulligan J.T."/>
            <person name="Hennessy K.M."/>
            <person name="Yelton M.A."/>
            <person name="Allen E."/>
            <person name="Araujo R."/>
            <person name="Aviles E."/>
            <person name="Berno A."/>
            <person name="Brennan T."/>
            <person name="Carpenter J."/>
            <person name="Chen E."/>
            <person name="Cherry J.M."/>
            <person name="Chung E."/>
            <person name="Duncan M."/>
            <person name="Guzman E."/>
            <person name="Hartzell G."/>
            <person name="Hunicke-Smith S."/>
            <person name="Hyman R.W."/>
            <person name="Kayser A."/>
            <person name="Komp C."/>
            <person name="Lashkari D."/>
            <person name="Lew H."/>
            <person name="Lin D."/>
            <person name="Mosedale D."/>
            <person name="Nakahara K."/>
            <person name="Namath A."/>
            <person name="Norgren R."/>
            <person name="Oefner P."/>
            <person name="Oh C."/>
            <person name="Petel F.X."/>
            <person name="Roberts D."/>
            <person name="Sehl P."/>
            <person name="Schramm S."/>
            <person name="Shogren T."/>
            <person name="Smith V."/>
            <person name="Taylor P."/>
            <person name="Wei Y."/>
            <person name="Botstein D."/>
            <person name="Davis R.W."/>
        </authorList>
    </citation>
    <scope>NUCLEOTIDE SEQUENCE [LARGE SCALE GENOMIC DNA]</scope>
    <source>
        <strain>ATCC 204508 / S288c</strain>
    </source>
</reference>
<reference key="2">
    <citation type="journal article" date="2014" name="G3 (Bethesda)">
        <title>The reference genome sequence of Saccharomyces cerevisiae: Then and now.</title>
        <authorList>
            <person name="Engel S.R."/>
            <person name="Dietrich F.S."/>
            <person name="Fisk D.G."/>
            <person name="Binkley G."/>
            <person name="Balakrishnan R."/>
            <person name="Costanzo M.C."/>
            <person name="Dwight S.S."/>
            <person name="Hitz B.C."/>
            <person name="Karra K."/>
            <person name="Nash R.S."/>
            <person name="Weng S."/>
            <person name="Wong E.D."/>
            <person name="Lloyd P."/>
            <person name="Skrzypek M.S."/>
            <person name="Miyasato S.R."/>
            <person name="Simison M."/>
            <person name="Cherry J.M."/>
        </authorList>
    </citation>
    <scope>GENOME REANNOTATION</scope>
    <source>
        <strain>ATCC 204508 / S288c</strain>
    </source>
</reference>
<reference key="3">
    <citation type="journal article" date="1993" name="J. Mol. Biol.">
        <title>The gene clusters ARC and COR on chromosomes 5 and 10, respectively, of Saccharomyces cerevisiae share a common ancestry.</title>
        <authorList>
            <person name="Melnick L."/>
            <person name="Sherman F."/>
        </authorList>
    </citation>
    <scope>NUCLEOTIDE SEQUENCE [GENOMIC DNA] OF 138-200</scope>
</reference>
<feature type="chain" id="PRO_0000299907" description="Putative uncharacterized protein YEL034C-A">
    <location>
        <begin position="1"/>
        <end position="200"/>
    </location>
</feature>
<feature type="transmembrane region" description="Helical" evidence="1">
    <location>
        <begin position="7"/>
        <end position="29"/>
    </location>
</feature>
<feature type="sequence conflict" description="In Ref. 3; AAD13969." evidence="2" ref="3">
    <original>VD</original>
    <variation>TS</variation>
    <location>
        <begin position="138"/>
        <end position="139"/>
    </location>
</feature>
<feature type="sequence conflict" description="In Ref. 3; AAD13969." evidence="2" ref="3">
    <original>S</original>
    <variation>T</variation>
    <location>
        <position position="170"/>
    </location>
</feature>
<accession>Q02217</accession>
<proteinExistence type="uncertain"/>
<gene>
    <name type="ordered locus">YEL034C-A</name>
</gene>
<organism>
    <name type="scientific">Saccharomyces cerevisiae (strain ATCC 204508 / S288c)</name>
    <name type="common">Baker's yeast</name>
    <dbReference type="NCBI Taxonomy" id="559292"/>
    <lineage>
        <taxon>Eukaryota</taxon>
        <taxon>Fungi</taxon>
        <taxon>Dikarya</taxon>
        <taxon>Ascomycota</taxon>
        <taxon>Saccharomycotina</taxon>
        <taxon>Saccharomycetes</taxon>
        <taxon>Saccharomycetales</taxon>
        <taxon>Saccharomycetaceae</taxon>
        <taxon>Saccharomyces</taxon>
    </lineage>
</organism>
<sequence>MEGASEFFFLFSFISHAMMLTGLIGSSSFLEGDGGFFTHSGDDGNHQVLTFIKSSLQTVTQFTFWSLDIILSVTVHVHQRQETVINVQQLVFVSLDNWNFHVVSRWRQIFQLLTSEDINGNQMDFSVTVLTSLRSGHVDNLTWSTLDDNETVLSQGRTLHWVGGGGTSVSSFKGMFFVRHCIYELVFVCVWESMSNWLQK</sequence>